<comment type="function">
    <text>Probable lipolytic acyl hydrolase (LAH), an activity which is thought to be involved in the response of tubers to pathogens.</text>
</comment>
<comment type="subcellular location">
    <subcellularLocation>
        <location evidence="4">Vacuole</location>
    </subcellularLocation>
</comment>
<comment type="tissue specificity">
    <text evidence="3">Tuber and stolon.</text>
</comment>
<comment type="developmental stage">
    <text evidence="3">Accumulates progressively during tuber formation from stolon.</text>
</comment>
<comment type="domain">
    <text>The nitrogen atoms of the two glycine residues in the GGXR motif define the oxyanion hole, and stabilize the oxyanion that forms during the nucleophilic attack by the catalytic serine during substrate cleavage.</text>
</comment>
<comment type="PTM">
    <text evidence="4">N-glycosylated.</text>
</comment>
<comment type="miscellaneous">
    <text>Patatin have a dual role as a somatic storage protein and as an enzyme involved in host resistance. This tuber protein represents approximately 40% of the total protein in mature tubers.</text>
</comment>
<comment type="similarity">
    <text evidence="5">Belongs to the patatin family.</text>
</comment>
<evidence type="ECO:0000255" key="1"/>
<evidence type="ECO:0000255" key="2">
    <source>
        <dbReference type="PROSITE-ProRule" id="PRU01161"/>
    </source>
</evidence>
<evidence type="ECO:0000269" key="3">
    <source>
    </source>
</evidence>
<evidence type="ECO:0000269" key="4">
    <source ref="2"/>
</evidence>
<evidence type="ECO:0000305" key="5"/>
<accession>P15478</accession>
<accession>Q2VBJ6</accession>
<feature type="signal peptide" evidence="4">
    <location>
        <begin position="1"/>
        <end position="23"/>
    </location>
</feature>
<feature type="chain" id="PRO_0000032260" description="Patatin-T5">
    <location>
        <begin position="24"/>
        <end position="386"/>
    </location>
</feature>
<feature type="domain" description="PNPLA" evidence="2">
    <location>
        <begin position="32"/>
        <end position="229"/>
    </location>
</feature>
<feature type="short sequence motif" description="GXGXXG" evidence="2">
    <location>
        <begin position="36"/>
        <end position="41"/>
    </location>
</feature>
<feature type="short sequence motif" description="GXSXG" evidence="2">
    <location>
        <begin position="75"/>
        <end position="79"/>
    </location>
</feature>
<feature type="short sequence motif" description="DGA/G" evidence="2">
    <location>
        <begin position="215"/>
        <end position="217"/>
    </location>
</feature>
<feature type="active site" description="Nucleophile" evidence="2">
    <location>
        <position position="77"/>
    </location>
</feature>
<feature type="active site" description="Proton acceptor" evidence="2">
    <location>
        <position position="215"/>
    </location>
</feature>
<feature type="glycosylation site" description="N-linked (GlcNAc...) asparagine" evidence="4">
    <location>
        <position position="60"/>
    </location>
</feature>
<feature type="glycosylation site" description="N-linked (GlcNAc...) asparagine" evidence="4">
    <location>
        <position position="90"/>
    </location>
</feature>
<feature type="glycosylation site" description="N-linked (GlcNAc...) asparagine" evidence="1">
    <location>
        <position position="202"/>
    </location>
</feature>
<sequence>MATTNSFTILIFMILATTSSTFATLGEMVTVLSIDGGGIKGIIPATILEFLEGQLQEVDNNTDARLADYFDVIGGTSTGGLLTAMITTPNETNRPFAAAKDIVPFYFEHGPKIFQSSGSIFGPKYDGKYLMQVLQEKLGETRVHQALTEVAISSFDIKTNKPVIFTKSNLAKSPELDAKMYDICYSTAAAPTFFPPHYFATNTSNGDKYEFNLVDGAVATVDDPALLSISVATKLAQVDPKFASIKSLNYKQMLLLSLGTGTTSEFDKTYTAEETAKWGTARWMLVIQKMTSAASSYMTDYYLSTAFQALDSQNNYLRVQENALTGTTTELDDASEANMQLLVQVGEDLLKKSVSKDNPETYEEALKRFAKLLSDRKKLRANKASY</sequence>
<protein>
    <recommendedName>
        <fullName>Patatin-T5</fullName>
        <ecNumber>3.1.1.-</ecNumber>
    </recommendedName>
    <alternativeName>
        <fullName>Group B patatin</fullName>
    </alternativeName>
</protein>
<organism>
    <name type="scientific">Solanum tuberosum</name>
    <name type="common">Potato</name>
    <dbReference type="NCBI Taxonomy" id="4113"/>
    <lineage>
        <taxon>Eukaryota</taxon>
        <taxon>Viridiplantae</taxon>
        <taxon>Streptophyta</taxon>
        <taxon>Embryophyta</taxon>
        <taxon>Tracheophyta</taxon>
        <taxon>Spermatophyta</taxon>
        <taxon>Magnoliopsida</taxon>
        <taxon>eudicotyledons</taxon>
        <taxon>Gunneridae</taxon>
        <taxon>Pentapetalae</taxon>
        <taxon>asterids</taxon>
        <taxon>lamiids</taxon>
        <taxon>Solanales</taxon>
        <taxon>Solanaceae</taxon>
        <taxon>Solanoideae</taxon>
        <taxon>Solaneae</taxon>
        <taxon>Solanum</taxon>
    </lineage>
</organism>
<dbReference type="EC" id="3.1.1.-"/>
<dbReference type="EMBL" id="X03932">
    <property type="protein sequence ID" value="CAA27571.1"/>
    <property type="molecule type" value="Genomic_DNA"/>
</dbReference>
<dbReference type="EMBL" id="DQ274462">
    <property type="protein sequence ID" value="ABB96228.1"/>
    <property type="molecule type" value="mRNA"/>
</dbReference>
<dbReference type="EMBL" id="DQ274182">
    <property type="protein sequence ID" value="ABC58772.1"/>
    <property type="molecule type" value="mRNA"/>
</dbReference>
<dbReference type="EMBL" id="DQ274196">
    <property type="protein sequence ID" value="ABC58786.1"/>
    <property type="molecule type" value="mRNA"/>
</dbReference>
<dbReference type="EMBL" id="DQ274197">
    <property type="protein sequence ID" value="ABC58787.1"/>
    <property type="molecule type" value="mRNA"/>
</dbReference>
<dbReference type="EMBL" id="DQ274201">
    <property type="protein sequence ID" value="ABC58791.1"/>
    <property type="molecule type" value="mRNA"/>
</dbReference>
<dbReference type="EMBL" id="DQ274217">
    <property type="protein sequence ID" value="ABC58807.1"/>
    <property type="molecule type" value="mRNA"/>
</dbReference>
<dbReference type="EMBL" id="DQ274244">
    <property type="protein sequence ID" value="ABC58832.1"/>
    <property type="molecule type" value="mRNA"/>
</dbReference>
<dbReference type="EMBL" id="DQ274262">
    <property type="protein sequence ID" value="ABC58849.1"/>
    <property type="molecule type" value="mRNA"/>
</dbReference>
<dbReference type="EMBL" id="DQ274268">
    <property type="protein sequence ID" value="ABC58855.1"/>
    <property type="molecule type" value="mRNA"/>
</dbReference>
<dbReference type="EMBL" id="DQ274271">
    <property type="protein sequence ID" value="ABC58858.1"/>
    <property type="molecule type" value="mRNA"/>
</dbReference>
<dbReference type="EMBL" id="DQ274279">
    <property type="protein sequence ID" value="ABC58866.1"/>
    <property type="molecule type" value="mRNA"/>
</dbReference>
<dbReference type="EMBL" id="DQ274301">
    <property type="protein sequence ID" value="ABC58887.1"/>
    <property type="molecule type" value="mRNA"/>
</dbReference>
<dbReference type="EMBL" id="DQ274332">
    <property type="protein sequence ID" value="ABC58916.1"/>
    <property type="molecule type" value="mRNA"/>
</dbReference>
<dbReference type="EMBL" id="DQ274362">
    <property type="protein sequence ID" value="ABC58945.1"/>
    <property type="molecule type" value="mRNA"/>
</dbReference>
<dbReference type="PIR" id="A26017">
    <property type="entry name" value="A26017"/>
</dbReference>
<dbReference type="SMR" id="P15478"/>
<dbReference type="STRING" id="4113.P15478"/>
<dbReference type="Allergome" id="639">
    <property type="allergen name" value="Sola t 1"/>
</dbReference>
<dbReference type="InParanoid" id="P15478"/>
<dbReference type="Proteomes" id="UP000011115">
    <property type="component" value="Unassembled WGS sequence"/>
</dbReference>
<dbReference type="ExpressionAtlas" id="P15478">
    <property type="expression patterns" value="baseline"/>
</dbReference>
<dbReference type="GO" id="GO:0005773">
    <property type="term" value="C:vacuole"/>
    <property type="evidence" value="ECO:0007669"/>
    <property type="project" value="UniProtKB-SubCell"/>
</dbReference>
<dbReference type="GO" id="GO:0047372">
    <property type="term" value="F:monoacylglycerol lipase activity"/>
    <property type="evidence" value="ECO:0000318"/>
    <property type="project" value="GO_Central"/>
</dbReference>
<dbReference type="GO" id="GO:0045735">
    <property type="term" value="F:nutrient reservoir activity"/>
    <property type="evidence" value="ECO:0007669"/>
    <property type="project" value="UniProtKB-KW"/>
</dbReference>
<dbReference type="GO" id="GO:0004620">
    <property type="term" value="F:phospholipase activity"/>
    <property type="evidence" value="ECO:0000318"/>
    <property type="project" value="GO_Central"/>
</dbReference>
<dbReference type="GO" id="GO:0006952">
    <property type="term" value="P:defense response"/>
    <property type="evidence" value="ECO:0007669"/>
    <property type="project" value="UniProtKB-KW"/>
</dbReference>
<dbReference type="GO" id="GO:0016042">
    <property type="term" value="P:lipid catabolic process"/>
    <property type="evidence" value="ECO:0007669"/>
    <property type="project" value="UniProtKB-KW"/>
</dbReference>
<dbReference type="Gene3D" id="3.40.1090.10">
    <property type="entry name" value="Cytosolic phospholipase A2 catalytic domain"/>
    <property type="match status" value="1"/>
</dbReference>
<dbReference type="InterPro" id="IPR016035">
    <property type="entry name" value="Acyl_Trfase/lysoPLipase"/>
</dbReference>
<dbReference type="InterPro" id="IPR002641">
    <property type="entry name" value="PNPLA_dom"/>
</dbReference>
<dbReference type="PANTHER" id="PTHR32176:SF85">
    <property type="entry name" value="PATATIN GROUP D-2"/>
    <property type="match status" value="1"/>
</dbReference>
<dbReference type="PANTHER" id="PTHR32176">
    <property type="entry name" value="XYLOSE ISOMERASE"/>
    <property type="match status" value="1"/>
</dbReference>
<dbReference type="Pfam" id="PF01734">
    <property type="entry name" value="Patatin"/>
    <property type="match status" value="1"/>
</dbReference>
<dbReference type="SUPFAM" id="SSF52151">
    <property type="entry name" value="FabD/lysophospholipase-like"/>
    <property type="match status" value="1"/>
</dbReference>
<dbReference type="PROSITE" id="PS51635">
    <property type="entry name" value="PNPLA"/>
    <property type="match status" value="1"/>
</dbReference>
<reference key="1">
    <citation type="journal article" date="1986" name="Mol. Gen. Genet.">
        <title>Isolation and characterization of a gene from Solanum tuberosum encoding patatin, the major storage protein of potato tubers.</title>
        <authorList>
            <person name="Rosahl S."/>
            <person name="Schmidt R."/>
            <person name="Schell J."/>
            <person name="Willmitzer L."/>
        </authorList>
    </citation>
    <scope>NUCLEOTIDE SEQUENCE [GENOMIC DNA]</scope>
</reference>
<reference key="2">
    <citation type="journal article" date="1989" name="Planta">
        <title>Targeting and glycosylation of patatin the major potato tuber protein in leaves of transgenic tobacco.</title>
        <authorList>
            <person name="Sonnewald U."/>
            <person name="Sturm A."/>
            <person name="Chrispeels M.J."/>
            <person name="Willmitzer L."/>
        </authorList>
    </citation>
    <scope>PROTEIN SEQUENCE OF 24-30; 41-47 AND 66-71</scope>
    <scope>SUBCELLULAR LOCATION</scope>
    <scope>GLYCOSYLATION AT ASN-60 AND ASN-90</scope>
</reference>
<reference key="3">
    <citation type="journal article" date="2006" name="Genetics">
        <title>Structural diversity and differential transcription of the patatin multicopy gene family during potato tuber development.</title>
        <authorList>
            <person name="Stupar R.M."/>
            <person name="Beaubien K.A."/>
            <person name="Jin W."/>
            <person name="Song J."/>
            <person name="Lee M.-K."/>
            <person name="Wu C."/>
            <person name="Zhang H.-B."/>
            <person name="Han B."/>
            <person name="Jiang J."/>
        </authorList>
    </citation>
    <scope>NUCLEOTIDE SEQUENCE [MRNA] OF 255-386</scope>
    <scope>DEVELOPMENTAL STAGE</scope>
    <scope>TISSUE SPECIFICITY</scope>
    <source>
        <strain>cv. Kennebec</strain>
        <tissue>Stolon</tissue>
        <tissue>Tuber</tissue>
    </source>
</reference>
<proteinExistence type="evidence at protein level"/>
<keyword id="KW-0903">Direct protein sequencing</keyword>
<keyword id="KW-0325">Glycoprotein</keyword>
<keyword id="KW-0378">Hydrolase</keyword>
<keyword id="KW-0442">Lipid degradation</keyword>
<keyword id="KW-0443">Lipid metabolism</keyword>
<keyword id="KW-0611">Plant defense</keyword>
<keyword id="KW-1185">Reference proteome</keyword>
<keyword id="KW-0732">Signal</keyword>
<keyword id="KW-0758">Storage protein</keyword>
<keyword id="KW-0926">Vacuole</keyword>
<name>PATT5_SOLTU</name>